<name>RS6E_METTH</name>
<gene>
    <name evidence="1" type="primary">rps6e</name>
    <name type="ordered locus">MTH_260</name>
</gene>
<accession>O26360</accession>
<keyword id="KW-1185">Reference proteome</keyword>
<keyword id="KW-0687">Ribonucleoprotein</keyword>
<keyword id="KW-0689">Ribosomal protein</keyword>
<dbReference type="EMBL" id="AE000666">
    <property type="protein sequence ID" value="AAB84766.1"/>
    <property type="molecule type" value="Genomic_DNA"/>
</dbReference>
<dbReference type="PIR" id="G69132">
    <property type="entry name" value="G69132"/>
</dbReference>
<dbReference type="RefSeq" id="WP_010875899.1">
    <property type="nucleotide sequence ID" value="NC_000916.1"/>
</dbReference>
<dbReference type="SMR" id="O26360"/>
<dbReference type="FunCoup" id="O26360">
    <property type="interactions" value="122"/>
</dbReference>
<dbReference type="STRING" id="187420.MTH_260"/>
<dbReference type="PaxDb" id="187420-MTH_260"/>
<dbReference type="DNASU" id="1470221"/>
<dbReference type="EnsemblBacteria" id="AAB84766">
    <property type="protein sequence ID" value="AAB84766"/>
    <property type="gene ID" value="MTH_260"/>
</dbReference>
<dbReference type="KEGG" id="mth:MTH_260"/>
<dbReference type="PATRIC" id="fig|187420.15.peg.229"/>
<dbReference type="HOGENOM" id="CLU_109671_1_1_2"/>
<dbReference type="InParanoid" id="O26360"/>
<dbReference type="Proteomes" id="UP000005223">
    <property type="component" value="Chromosome"/>
</dbReference>
<dbReference type="GO" id="GO:1990904">
    <property type="term" value="C:ribonucleoprotein complex"/>
    <property type="evidence" value="ECO:0007669"/>
    <property type="project" value="UniProtKB-KW"/>
</dbReference>
<dbReference type="GO" id="GO:0005840">
    <property type="term" value="C:ribosome"/>
    <property type="evidence" value="ECO:0007669"/>
    <property type="project" value="UniProtKB-KW"/>
</dbReference>
<dbReference type="GO" id="GO:0003735">
    <property type="term" value="F:structural constituent of ribosome"/>
    <property type="evidence" value="ECO:0007669"/>
    <property type="project" value="InterPro"/>
</dbReference>
<dbReference type="GO" id="GO:0006412">
    <property type="term" value="P:translation"/>
    <property type="evidence" value="ECO:0007669"/>
    <property type="project" value="UniProtKB-UniRule"/>
</dbReference>
<dbReference type="HAMAP" id="MF_00512">
    <property type="entry name" value="Ribosomal_eS6"/>
    <property type="match status" value="1"/>
</dbReference>
<dbReference type="InterPro" id="IPR001377">
    <property type="entry name" value="Ribosomal_eS6"/>
</dbReference>
<dbReference type="InterPro" id="IPR020924">
    <property type="entry name" value="Ribosomal_eS6_arc"/>
</dbReference>
<dbReference type="InterPro" id="IPR018282">
    <property type="entry name" value="Ribosomal_eS6_CS"/>
</dbReference>
<dbReference type="NCBIfam" id="NF003294">
    <property type="entry name" value="PRK04290.1-3"/>
    <property type="match status" value="1"/>
</dbReference>
<dbReference type="PANTHER" id="PTHR11502">
    <property type="entry name" value="40S RIBOSOMAL PROTEIN S6"/>
    <property type="match status" value="1"/>
</dbReference>
<dbReference type="Pfam" id="PF01092">
    <property type="entry name" value="Ribosomal_S6e"/>
    <property type="match status" value="1"/>
</dbReference>
<dbReference type="SMART" id="SM01405">
    <property type="entry name" value="Ribosomal_S6e"/>
    <property type="match status" value="1"/>
</dbReference>
<dbReference type="PROSITE" id="PS00578">
    <property type="entry name" value="RIBOSOMAL_S6E"/>
    <property type="match status" value="1"/>
</dbReference>
<reference key="1">
    <citation type="journal article" date="1997" name="J. Bacteriol.">
        <title>Complete genome sequence of Methanobacterium thermoautotrophicum deltaH: functional analysis and comparative genomics.</title>
        <authorList>
            <person name="Smith D.R."/>
            <person name="Doucette-Stamm L.A."/>
            <person name="Deloughery C."/>
            <person name="Lee H.-M."/>
            <person name="Dubois J."/>
            <person name="Aldredge T."/>
            <person name="Bashirzadeh R."/>
            <person name="Blakely D."/>
            <person name="Cook R."/>
            <person name="Gilbert K."/>
            <person name="Harrison D."/>
            <person name="Hoang L."/>
            <person name="Keagle P."/>
            <person name="Lumm W."/>
            <person name="Pothier B."/>
            <person name="Qiu D."/>
            <person name="Spadafora R."/>
            <person name="Vicare R."/>
            <person name="Wang Y."/>
            <person name="Wierzbowski J."/>
            <person name="Gibson R."/>
            <person name="Jiwani N."/>
            <person name="Caruso A."/>
            <person name="Bush D."/>
            <person name="Safer H."/>
            <person name="Patwell D."/>
            <person name="Prabhakar S."/>
            <person name="McDougall S."/>
            <person name="Shimer G."/>
            <person name="Goyal A."/>
            <person name="Pietrovski S."/>
            <person name="Church G.M."/>
            <person name="Daniels C.J."/>
            <person name="Mao J.-I."/>
            <person name="Rice P."/>
            <person name="Noelling J."/>
            <person name="Reeve J.N."/>
        </authorList>
    </citation>
    <scope>NUCLEOTIDE SEQUENCE [LARGE SCALE GENOMIC DNA]</scope>
    <source>
        <strain>ATCC 29096 / DSM 1053 / JCM 10044 / NBRC 100330 / Delta H</strain>
    </source>
</reference>
<evidence type="ECO:0000255" key="1">
    <source>
        <dbReference type="HAMAP-Rule" id="MF_00512"/>
    </source>
</evidence>
<evidence type="ECO:0000305" key="2"/>
<sequence length="126" mass="13769">MAFKVVISDKEKSVQMEVDPSESRGLIGLTIGDEFDGSIIGLSGYKLKITGGSDKNGFPMKKTVPGARRIRSLVSGGVGYKPRRDGERRRKTFRGNTISDDIVQINTVVIEKGEKPLEELLGADEE</sequence>
<protein>
    <recommendedName>
        <fullName evidence="1">Small ribosomal subunit protein eS6</fullName>
    </recommendedName>
    <alternativeName>
        <fullName evidence="2">30S ribosomal protein S6e</fullName>
    </alternativeName>
</protein>
<organism>
    <name type="scientific">Methanothermobacter thermautotrophicus (strain ATCC 29096 / DSM 1053 / JCM 10044 / NBRC 100330 / Delta H)</name>
    <name type="common">Methanobacterium thermoautotrophicum</name>
    <dbReference type="NCBI Taxonomy" id="187420"/>
    <lineage>
        <taxon>Archaea</taxon>
        <taxon>Methanobacteriati</taxon>
        <taxon>Methanobacteriota</taxon>
        <taxon>Methanomada group</taxon>
        <taxon>Methanobacteria</taxon>
        <taxon>Methanobacteriales</taxon>
        <taxon>Methanobacteriaceae</taxon>
        <taxon>Methanothermobacter</taxon>
    </lineage>
</organism>
<proteinExistence type="inferred from homology"/>
<comment type="similarity">
    <text evidence="1">Belongs to the eukaryotic ribosomal protein eS6 family.</text>
</comment>
<feature type="chain" id="PRO_0000137352" description="Small ribosomal subunit protein eS6">
    <location>
        <begin position="1"/>
        <end position="126"/>
    </location>
</feature>